<evidence type="ECO:0000255" key="1">
    <source>
        <dbReference type="HAMAP-Rule" id="MF_01221"/>
    </source>
</evidence>
<organism>
    <name type="scientific">Streptococcus thermophilus (strain ATCC BAA-491 / LMD-9)</name>
    <dbReference type="NCBI Taxonomy" id="322159"/>
    <lineage>
        <taxon>Bacteria</taxon>
        <taxon>Bacillati</taxon>
        <taxon>Bacillota</taxon>
        <taxon>Bacilli</taxon>
        <taxon>Lactobacillales</taxon>
        <taxon>Streptococcaceae</taxon>
        <taxon>Streptococcus</taxon>
    </lineage>
</organism>
<reference key="1">
    <citation type="journal article" date="2006" name="Proc. Natl. Acad. Sci. U.S.A.">
        <title>Comparative genomics of the lactic acid bacteria.</title>
        <authorList>
            <person name="Makarova K.S."/>
            <person name="Slesarev A."/>
            <person name="Wolf Y.I."/>
            <person name="Sorokin A."/>
            <person name="Mirkin B."/>
            <person name="Koonin E.V."/>
            <person name="Pavlov A."/>
            <person name="Pavlova N."/>
            <person name="Karamychev V."/>
            <person name="Polouchine N."/>
            <person name="Shakhova V."/>
            <person name="Grigoriev I."/>
            <person name="Lou Y."/>
            <person name="Rohksar D."/>
            <person name="Lucas S."/>
            <person name="Huang K."/>
            <person name="Goodstein D.M."/>
            <person name="Hawkins T."/>
            <person name="Plengvidhya V."/>
            <person name="Welker D."/>
            <person name="Hughes J."/>
            <person name="Goh Y."/>
            <person name="Benson A."/>
            <person name="Baldwin K."/>
            <person name="Lee J.-H."/>
            <person name="Diaz-Muniz I."/>
            <person name="Dosti B."/>
            <person name="Smeianov V."/>
            <person name="Wechter W."/>
            <person name="Barabote R."/>
            <person name="Lorca G."/>
            <person name="Altermann E."/>
            <person name="Barrangou R."/>
            <person name="Ganesan B."/>
            <person name="Xie Y."/>
            <person name="Rawsthorne H."/>
            <person name="Tamir D."/>
            <person name="Parker C."/>
            <person name="Breidt F."/>
            <person name="Broadbent J.R."/>
            <person name="Hutkins R."/>
            <person name="O'Sullivan D."/>
            <person name="Steele J."/>
            <person name="Unlu G."/>
            <person name="Saier M.H. Jr."/>
            <person name="Klaenhammer T."/>
            <person name="Richardson P."/>
            <person name="Kozyavkin S."/>
            <person name="Weimer B.C."/>
            <person name="Mills D.A."/>
        </authorList>
    </citation>
    <scope>NUCLEOTIDE SEQUENCE [LARGE SCALE GENOMIC DNA]</scope>
    <source>
        <strain>ATCC BAA-491 / LMD-9</strain>
    </source>
</reference>
<feature type="chain" id="PRO_1000066779" description="UPF0210 protein STER_0157">
    <location>
        <begin position="1"/>
        <end position="445"/>
    </location>
</feature>
<proteinExistence type="inferred from homology"/>
<accession>Q03MS2</accession>
<comment type="subunit">
    <text evidence="1">Homodimer.</text>
</comment>
<comment type="similarity">
    <text evidence="1">Belongs to the UPF0210 family.</text>
</comment>
<gene>
    <name type="ordered locus">STER_0157</name>
</gene>
<sequence>MDIKQVTETIAMIEEQNFDVRTITMGISLLDCIDSDIDKAAEKVYNKIVSKAKNLVAVGDEIAAELGIPIVNKRVSVTPISIIGAATDATDYVPFARALDRAAKEIGINFIGGFSALVQKGYQKGDEILIDSIPRALAETDFVCSSVNIGSTKTGINMTAVRDMGRIIKEASEADPMGPGKLVVFANAVEDNPFMAGAFHGVGEADVVINVGVSGPGVVQRAVEKVPGESFDVLAETVKKTAFKITRVGQLVGQMASERLGVEFGIVDLSLAPTPAVGDSVARVLEAMGLEVVGTHGTTAALALLNDQVKKGGIMACNQVGGLSGAFIPVSEDEGMIAAVQSGHINLEKLEAMTAICSVGLDMIAIPADTPDTTIAAMIADEAAIGVINQKTTAVRIIPYGKEGDMLELGGLLGYAPVMKVNKASSADFIARGGQIPAPVHSFKN</sequence>
<dbReference type="EMBL" id="CP000419">
    <property type="protein sequence ID" value="ABJ65500.1"/>
    <property type="molecule type" value="Genomic_DNA"/>
</dbReference>
<dbReference type="RefSeq" id="WP_011680644.1">
    <property type="nucleotide sequence ID" value="NC_008532.1"/>
</dbReference>
<dbReference type="SMR" id="Q03MS2"/>
<dbReference type="GeneID" id="66898039"/>
<dbReference type="KEGG" id="ste:STER_0157"/>
<dbReference type="HOGENOM" id="CLU_048704_0_0_9"/>
<dbReference type="CDD" id="cd08025">
    <property type="entry name" value="RNR_PFL_like_DUF711"/>
    <property type="match status" value="1"/>
</dbReference>
<dbReference type="Gene3D" id="3.20.70.20">
    <property type="match status" value="1"/>
</dbReference>
<dbReference type="HAMAP" id="MF_01221">
    <property type="entry name" value="UPF0210"/>
    <property type="match status" value="1"/>
</dbReference>
<dbReference type="InterPro" id="IPR007841">
    <property type="entry name" value="UPF0210"/>
</dbReference>
<dbReference type="NCBIfam" id="NF003700">
    <property type="entry name" value="PRK05313.1"/>
    <property type="match status" value="1"/>
</dbReference>
<dbReference type="PANTHER" id="PTHR37560:SF1">
    <property type="entry name" value="UPF0210 PROTEIN MJ1665"/>
    <property type="match status" value="1"/>
</dbReference>
<dbReference type="PANTHER" id="PTHR37560">
    <property type="entry name" value="UPF0210 PROTEIN SPR0218"/>
    <property type="match status" value="1"/>
</dbReference>
<dbReference type="Pfam" id="PF05167">
    <property type="entry name" value="DUF711"/>
    <property type="match status" value="1"/>
</dbReference>
<dbReference type="SUPFAM" id="SSF51998">
    <property type="entry name" value="PFL-like glycyl radical enzymes"/>
    <property type="match status" value="1"/>
</dbReference>
<name>Y157_STRTD</name>
<protein>
    <recommendedName>
        <fullName evidence="1">UPF0210 protein STER_0157</fullName>
    </recommendedName>
</protein>